<evidence type="ECO:0000255" key="1">
    <source>
        <dbReference type="PROSITE-ProRule" id="PRU00798"/>
    </source>
</evidence>
<reference key="1">
    <citation type="journal article" date="1988" name="Eur. J. Biochem.">
        <title>A peptide from the eel pancreas with structural similarity to human pancreatic secretory trypsin inhibitor.</title>
        <authorList>
            <person name="Conlon J.M."/>
            <person name="Thim L."/>
        </authorList>
    </citation>
    <scope>PROTEIN SEQUENCE</scope>
    <source>
        <tissue>Pancreas</tissue>
    </source>
</reference>
<sequence>EEKSGLYRKPSCGEMSAMHACPMNFAPVCGTDGNTYPNECSLCFQRQNTKTDILITKDDRC</sequence>
<name>ISK1_ANGAN</name>
<comment type="subcellular location">
    <subcellularLocation>
        <location>Secreted</location>
    </subcellularLocation>
</comment>
<proteinExistence type="evidence at protein level"/>
<keyword id="KW-0903">Direct protein sequencing</keyword>
<keyword id="KW-1015">Disulfide bond</keyword>
<keyword id="KW-0646">Protease inhibitor</keyword>
<keyword id="KW-0964">Secreted</keyword>
<keyword id="KW-0722">Serine protease inhibitor</keyword>
<organism>
    <name type="scientific">Anguilla anguilla</name>
    <name type="common">European freshwater eel</name>
    <name type="synonym">Muraena anguilla</name>
    <dbReference type="NCBI Taxonomy" id="7936"/>
    <lineage>
        <taxon>Eukaryota</taxon>
        <taxon>Metazoa</taxon>
        <taxon>Chordata</taxon>
        <taxon>Craniata</taxon>
        <taxon>Vertebrata</taxon>
        <taxon>Euteleostomi</taxon>
        <taxon>Actinopterygii</taxon>
        <taxon>Neopterygii</taxon>
        <taxon>Teleostei</taxon>
        <taxon>Anguilliformes</taxon>
        <taxon>Anguillidae</taxon>
        <taxon>Anguilla</taxon>
    </lineage>
</organism>
<protein>
    <recommendedName>
        <fullName>Probable pancreatic secretory proteinase inhibitor</fullName>
    </recommendedName>
    <alternativeName>
        <fullName>PSTI type</fullName>
    </alternativeName>
</protein>
<feature type="chain" id="PRO_0000073030" description="Probable pancreatic secretory proteinase inhibitor">
    <location>
        <begin position="1"/>
        <end position="61"/>
    </location>
</feature>
<feature type="domain" description="Kazal-like" evidence="1">
    <location>
        <begin position="6"/>
        <end position="61"/>
    </location>
</feature>
<feature type="site" description="Reactive bond" evidence="1">
    <location>
        <begin position="23"/>
        <end position="24"/>
    </location>
</feature>
<feature type="disulfide bond" evidence="1">
    <location>
        <begin position="12"/>
        <end position="43"/>
    </location>
</feature>
<feature type="disulfide bond" evidence="1">
    <location>
        <begin position="21"/>
        <end position="40"/>
    </location>
</feature>
<feature type="disulfide bond" evidence="1">
    <location>
        <begin position="29"/>
        <end position="61"/>
    </location>
</feature>
<dbReference type="PIR" id="S00630">
    <property type="entry name" value="TIEEH"/>
</dbReference>
<dbReference type="SMR" id="P11706"/>
<dbReference type="GO" id="GO:0005576">
    <property type="term" value="C:extracellular region"/>
    <property type="evidence" value="ECO:0007669"/>
    <property type="project" value="UniProtKB-SubCell"/>
</dbReference>
<dbReference type="GO" id="GO:0004867">
    <property type="term" value="F:serine-type endopeptidase inhibitor activity"/>
    <property type="evidence" value="ECO:0007669"/>
    <property type="project" value="UniProtKB-KW"/>
</dbReference>
<dbReference type="CDD" id="cd01327">
    <property type="entry name" value="KAZAL_PSTI"/>
    <property type="match status" value="1"/>
</dbReference>
<dbReference type="Gene3D" id="3.30.60.30">
    <property type="match status" value="1"/>
</dbReference>
<dbReference type="InterPro" id="IPR051597">
    <property type="entry name" value="Bifunctional_prot_inhibitor"/>
</dbReference>
<dbReference type="InterPro" id="IPR002350">
    <property type="entry name" value="Kazal_dom"/>
</dbReference>
<dbReference type="InterPro" id="IPR036058">
    <property type="entry name" value="Kazal_dom_sf"/>
</dbReference>
<dbReference type="InterPro" id="IPR001239">
    <property type="entry name" value="Prot_inh_Kazal-m"/>
</dbReference>
<dbReference type="PANTHER" id="PTHR47729:SF1">
    <property type="entry name" value="OVOMUCOID-LIKE-RELATED"/>
    <property type="match status" value="1"/>
</dbReference>
<dbReference type="PANTHER" id="PTHR47729">
    <property type="entry name" value="SERINE PEPTIDASE INHIBITOR, KAZAL TYPE 2, TANDEM DUPLICATE 1-RELATED"/>
    <property type="match status" value="1"/>
</dbReference>
<dbReference type="Pfam" id="PF00050">
    <property type="entry name" value="Kazal_1"/>
    <property type="match status" value="1"/>
</dbReference>
<dbReference type="PRINTS" id="PR00290">
    <property type="entry name" value="KAZALINHBTR"/>
</dbReference>
<dbReference type="SMART" id="SM00280">
    <property type="entry name" value="KAZAL"/>
    <property type="match status" value="1"/>
</dbReference>
<dbReference type="SUPFAM" id="SSF100895">
    <property type="entry name" value="Kazal-type serine protease inhibitors"/>
    <property type="match status" value="1"/>
</dbReference>
<dbReference type="PROSITE" id="PS00282">
    <property type="entry name" value="KAZAL_1"/>
    <property type="match status" value="1"/>
</dbReference>
<dbReference type="PROSITE" id="PS51465">
    <property type="entry name" value="KAZAL_2"/>
    <property type="match status" value="1"/>
</dbReference>
<accession>P11706</accession>